<evidence type="ECO:0000250" key="1"/>
<evidence type="ECO:0000305" key="2"/>
<keyword id="KW-1005">Bacterial flagellum biogenesis</keyword>
<keyword id="KW-1185">Reference proteome</keyword>
<reference key="1">
    <citation type="journal article" date="2000" name="Nature">
        <title>Genome sequence of the endocellular bacterial symbiont of aphids Buchnera sp. APS.</title>
        <authorList>
            <person name="Shigenobu S."/>
            <person name="Watanabe H."/>
            <person name="Hattori M."/>
            <person name="Sakaki Y."/>
            <person name="Ishikawa H."/>
        </authorList>
    </citation>
    <scope>NUCLEOTIDE SEQUENCE [LARGE SCALE GENOMIC DNA]</scope>
    <source>
        <strain>APS</strain>
    </source>
</reference>
<feature type="chain" id="PRO_0000180905" description="Flagellar hook-length control protein homolog">
    <location>
        <begin position="1"/>
        <end position="235"/>
    </location>
</feature>
<comment type="function">
    <text evidence="1">Controls the length of the flagellar hook.</text>
</comment>
<comment type="similarity">
    <text evidence="2">Belongs to the FliK family.</text>
</comment>
<protein>
    <recommendedName>
        <fullName>Flagellar hook-length control protein homolog</fullName>
    </recommendedName>
</protein>
<accession>P57181</accession>
<accession>Q9F457</accession>
<dbReference type="EMBL" id="BA000003">
    <property type="protein sequence ID" value="BAB12799.1"/>
    <property type="molecule type" value="Genomic_DNA"/>
</dbReference>
<dbReference type="RefSeq" id="NP_239913.1">
    <property type="nucleotide sequence ID" value="NC_002528.1"/>
</dbReference>
<dbReference type="SMR" id="P57181"/>
<dbReference type="STRING" id="563178.BUAP5A_078"/>
<dbReference type="EnsemblBacteria" id="BAB12799">
    <property type="protein sequence ID" value="BAB12799"/>
    <property type="gene ID" value="BAB12799"/>
</dbReference>
<dbReference type="KEGG" id="buc:BU079"/>
<dbReference type="PATRIC" id="fig|107806.10.peg.85"/>
<dbReference type="eggNOG" id="COG3144">
    <property type="taxonomic scope" value="Bacteria"/>
</dbReference>
<dbReference type="HOGENOM" id="CLU_1178448_0_0_6"/>
<dbReference type="Proteomes" id="UP000001806">
    <property type="component" value="Chromosome"/>
</dbReference>
<dbReference type="GO" id="GO:0009424">
    <property type="term" value="C:bacterial-type flagellum hook"/>
    <property type="evidence" value="ECO:0007669"/>
    <property type="project" value="InterPro"/>
</dbReference>
<dbReference type="GO" id="GO:0044780">
    <property type="term" value="P:bacterial-type flagellum assembly"/>
    <property type="evidence" value="ECO:0007669"/>
    <property type="project" value="InterPro"/>
</dbReference>
<dbReference type="CDD" id="cd17470">
    <property type="entry name" value="T3SS_Flik_C"/>
    <property type="match status" value="1"/>
</dbReference>
<dbReference type="Gene3D" id="3.30.750.140">
    <property type="match status" value="1"/>
</dbReference>
<dbReference type="InterPro" id="IPR001635">
    <property type="entry name" value="Flag_hook_Flik"/>
</dbReference>
<dbReference type="InterPro" id="IPR021136">
    <property type="entry name" value="Flagellar_hook_control-like_C"/>
</dbReference>
<dbReference type="InterPro" id="IPR052563">
    <property type="entry name" value="FliK"/>
</dbReference>
<dbReference type="InterPro" id="IPR038610">
    <property type="entry name" value="FliK-like_C_sf"/>
</dbReference>
<dbReference type="PANTHER" id="PTHR37533">
    <property type="entry name" value="FLAGELLAR HOOK-LENGTH CONTROL PROTEIN"/>
    <property type="match status" value="1"/>
</dbReference>
<dbReference type="PANTHER" id="PTHR37533:SF2">
    <property type="entry name" value="FLAGELLAR HOOK-LENGTH CONTROL PROTEIN"/>
    <property type="match status" value="1"/>
</dbReference>
<dbReference type="Pfam" id="PF02120">
    <property type="entry name" value="Flg_hook"/>
    <property type="match status" value="1"/>
</dbReference>
<dbReference type="PRINTS" id="PR01007">
    <property type="entry name" value="FLGHOOKFLIK"/>
</dbReference>
<proteinExistence type="inferred from homology"/>
<sequence>MHESSNIKKKNDFDFKNLKNKTLQKKINVFDTIKNHIKIINNEEKIILPLNIKKNKKIVFDSKNINKINPMISKRHSCKILSNKKEFIKSYIEPFMSSDTKNSIEWKKLISHKILLSISNKYNQAKIHLKPESLGSIYVSISMKNNIATLKFISEHNEVKTFLDSYMPFLYNSLKKNGIKLKEFKISISSKKNQLKNYKNLFYKNIYYTDHIKKTLNWNEKKIDYIKDKTIDVYV</sequence>
<gene>
    <name type="primary">fliK</name>
    <name type="ordered locus">BU079</name>
</gene>
<name>FLIK_BUCAI</name>
<organism>
    <name type="scientific">Buchnera aphidicola subsp. Acyrthosiphon pisum (strain APS)</name>
    <name type="common">Acyrthosiphon pisum symbiotic bacterium</name>
    <dbReference type="NCBI Taxonomy" id="107806"/>
    <lineage>
        <taxon>Bacteria</taxon>
        <taxon>Pseudomonadati</taxon>
        <taxon>Pseudomonadota</taxon>
        <taxon>Gammaproteobacteria</taxon>
        <taxon>Enterobacterales</taxon>
        <taxon>Erwiniaceae</taxon>
        <taxon>Buchnera</taxon>
    </lineage>
</organism>